<name>RM22_BOVIN</name>
<proteinExistence type="evidence at protein level"/>
<sequence length="204" mass="23552">MAAVILERLGALWVQNLRGKLALGILPQSHIHTSASLEISRKWEKKNKIVYPPQLPGEPRRPAEIYHCRRQIKYSKDKMWYLAKLIRGMSIDQALAQLEFSDKKGAQIIKEVLLEAQDMAVRDHNVEFRSNLYIAESTSGRGQYLKRIRYHGRGRFGIMEKVFCHYFVKLVEGPPPPPEAPKTAVTHAKEYIQELRNRTIIHAL</sequence>
<organism>
    <name type="scientific">Bos taurus</name>
    <name type="common">Bovine</name>
    <dbReference type="NCBI Taxonomy" id="9913"/>
    <lineage>
        <taxon>Eukaryota</taxon>
        <taxon>Metazoa</taxon>
        <taxon>Chordata</taxon>
        <taxon>Craniata</taxon>
        <taxon>Vertebrata</taxon>
        <taxon>Euteleostomi</taxon>
        <taxon>Mammalia</taxon>
        <taxon>Eutheria</taxon>
        <taxon>Laurasiatheria</taxon>
        <taxon>Artiodactyla</taxon>
        <taxon>Ruminantia</taxon>
        <taxon>Pecora</taxon>
        <taxon>Bovidae</taxon>
        <taxon>Bovinae</taxon>
        <taxon>Bos</taxon>
    </lineage>
</organism>
<evidence type="ECO:0000250" key="1"/>
<evidence type="ECO:0000269" key="2">
    <source>
    </source>
</evidence>
<evidence type="ECO:0000269" key="3">
    <source>
    </source>
</evidence>
<evidence type="ECO:0000269" key="4">
    <source>
    </source>
</evidence>
<evidence type="ECO:0000305" key="5"/>
<protein>
    <recommendedName>
        <fullName evidence="5">Large ribosomal subunit protein uL22m</fullName>
    </recommendedName>
    <alternativeName>
        <fullName>39S ribosomal protein L22, mitochondrial</fullName>
        <shortName>L22mt</shortName>
        <shortName>MRP-L22</shortName>
    </alternativeName>
</protein>
<gene>
    <name type="primary">MRPL22</name>
</gene>
<dbReference type="EMBL" id="BC102665">
    <property type="protein sequence ID" value="AAI02666.1"/>
    <property type="molecule type" value="mRNA"/>
</dbReference>
<dbReference type="RefSeq" id="NP_001030531.1">
    <property type="nucleotide sequence ID" value="NM_001035454.2"/>
</dbReference>
<dbReference type="PDB" id="2FTC">
    <property type="method" value="EM"/>
    <property type="chains" value="M=67-176"/>
</dbReference>
<dbReference type="PDB" id="3IY9">
    <property type="method" value="EM"/>
    <property type="resolution" value="14.10 A"/>
    <property type="chains" value="M=67-176"/>
</dbReference>
<dbReference type="PDBsum" id="2FTC"/>
<dbReference type="PDBsum" id="3IY9"/>
<dbReference type="SMR" id="Q3SZX5"/>
<dbReference type="FunCoup" id="Q3SZX5">
    <property type="interactions" value="2014"/>
</dbReference>
<dbReference type="IntAct" id="Q3SZX5">
    <property type="interactions" value="1"/>
</dbReference>
<dbReference type="STRING" id="9913.ENSBTAP00000040453"/>
<dbReference type="PaxDb" id="9913-ENSBTAP00000040453"/>
<dbReference type="GeneID" id="614639"/>
<dbReference type="KEGG" id="bta:614639"/>
<dbReference type="CTD" id="29093"/>
<dbReference type="VEuPathDB" id="HostDB:ENSBTAG00000019457"/>
<dbReference type="eggNOG" id="KOG1711">
    <property type="taxonomic scope" value="Eukaryota"/>
</dbReference>
<dbReference type="HOGENOM" id="CLU_100005_1_0_1"/>
<dbReference type="InParanoid" id="Q3SZX5"/>
<dbReference type="OMA" id="HKVIRQM"/>
<dbReference type="OrthoDB" id="416470at2759"/>
<dbReference type="TreeFam" id="TF315111"/>
<dbReference type="Reactome" id="R-BTA-5389840">
    <property type="pathway name" value="Mitochondrial translation elongation"/>
</dbReference>
<dbReference type="Reactome" id="R-BTA-5419276">
    <property type="pathway name" value="Mitochondrial translation termination"/>
</dbReference>
<dbReference type="EvolutionaryTrace" id="Q3SZX5"/>
<dbReference type="Proteomes" id="UP000009136">
    <property type="component" value="Chromosome 7"/>
</dbReference>
<dbReference type="Bgee" id="ENSBTAG00000019457">
    <property type="expression patterns" value="Expressed in oocyte and 106 other cell types or tissues"/>
</dbReference>
<dbReference type="GO" id="GO:0005743">
    <property type="term" value="C:mitochondrial inner membrane"/>
    <property type="evidence" value="ECO:0000304"/>
    <property type="project" value="Reactome"/>
</dbReference>
<dbReference type="GO" id="GO:0005762">
    <property type="term" value="C:mitochondrial large ribosomal subunit"/>
    <property type="evidence" value="ECO:0000250"/>
    <property type="project" value="UniProtKB"/>
</dbReference>
<dbReference type="GO" id="GO:0005739">
    <property type="term" value="C:mitochondrion"/>
    <property type="evidence" value="ECO:0000314"/>
    <property type="project" value="UniProtKB"/>
</dbReference>
<dbReference type="GO" id="GO:0003735">
    <property type="term" value="F:structural constituent of ribosome"/>
    <property type="evidence" value="ECO:0000318"/>
    <property type="project" value="GO_Central"/>
</dbReference>
<dbReference type="GO" id="GO:0006412">
    <property type="term" value="P:translation"/>
    <property type="evidence" value="ECO:0000318"/>
    <property type="project" value="GO_Central"/>
</dbReference>
<dbReference type="CDD" id="cd00336">
    <property type="entry name" value="Ribosomal_L22"/>
    <property type="match status" value="1"/>
</dbReference>
<dbReference type="FunFam" id="3.90.470.10:FF:000009">
    <property type="entry name" value="39S ribosomal protein L22, mitochondrial"/>
    <property type="match status" value="1"/>
</dbReference>
<dbReference type="Gene3D" id="3.90.470.10">
    <property type="entry name" value="Ribosomal protein L22/L17"/>
    <property type="match status" value="1"/>
</dbReference>
<dbReference type="InterPro" id="IPR001063">
    <property type="entry name" value="Ribosomal_uL22"/>
</dbReference>
<dbReference type="InterPro" id="IPR047867">
    <property type="entry name" value="Ribosomal_uL22_bac/org-type"/>
</dbReference>
<dbReference type="InterPro" id="IPR036394">
    <property type="entry name" value="Ribosomal_uL22_sf"/>
</dbReference>
<dbReference type="PANTHER" id="PTHR13501">
    <property type="entry name" value="CHLOROPLAST 50S RIBOSOMAL PROTEIN L22-RELATED"/>
    <property type="match status" value="1"/>
</dbReference>
<dbReference type="PANTHER" id="PTHR13501:SF8">
    <property type="entry name" value="LARGE RIBOSOMAL SUBUNIT PROTEIN UL22M"/>
    <property type="match status" value="1"/>
</dbReference>
<dbReference type="Pfam" id="PF00237">
    <property type="entry name" value="Ribosomal_L22"/>
    <property type="match status" value="1"/>
</dbReference>
<dbReference type="SUPFAM" id="SSF54843">
    <property type="entry name" value="Ribosomal protein L22"/>
    <property type="match status" value="1"/>
</dbReference>
<feature type="transit peptide" description="Mitochondrion" evidence="1">
    <location>
        <begin position="1"/>
        <end position="38"/>
    </location>
</feature>
<feature type="chain" id="PRO_0000261643" description="Large ribosomal subunit protein uL22m">
    <location>
        <begin position="39"/>
        <end position="204"/>
    </location>
</feature>
<accession>Q3SZX5</accession>
<keyword id="KW-0002">3D-structure</keyword>
<keyword id="KW-0496">Mitochondrion</keyword>
<keyword id="KW-1185">Reference proteome</keyword>
<keyword id="KW-0687">Ribonucleoprotein</keyword>
<keyword id="KW-0689">Ribosomal protein</keyword>
<keyword id="KW-0809">Transit peptide</keyword>
<reference key="1">
    <citation type="submission" date="2005-08" db="EMBL/GenBank/DDBJ databases">
        <authorList>
            <consortium name="NIH - Mammalian Gene Collection (MGC) project"/>
        </authorList>
    </citation>
    <scope>NUCLEOTIDE SEQUENCE [LARGE SCALE MRNA]</scope>
    <source>
        <strain>Crossbred X Angus</strain>
        <tissue>Liver</tissue>
    </source>
</reference>
<reference key="2">
    <citation type="journal article" date="2001" name="J. Biol. Chem.">
        <title>Structural compensation for the deficit of rRNA with proteins in the mammalian mitochondrial ribosome. Systematic analysis of protein components of the large ribosomal subunit from mammalian mitochondria.</title>
        <authorList>
            <person name="Suzuki T."/>
            <person name="Terasaki M."/>
            <person name="Takemoto-Hori C."/>
            <person name="Hanada T."/>
            <person name="Ueda T."/>
            <person name="Wada A."/>
            <person name="Watanabe K."/>
        </authorList>
    </citation>
    <scope>IDENTIFICATION BY MASS SPECTROMETRY</scope>
    <scope>SUBCELLULAR LOCATION</scope>
    <scope>SUBUNIT</scope>
</reference>
<reference key="3">
    <citation type="journal article" date="2001" name="J. Biol. Chem.">
        <title>The large subunit of the mammalian mitochondrial ribosome. Analysis of the complement of ribosomal proteins present.</title>
        <authorList>
            <person name="Koc E.C."/>
            <person name="Burkhart W."/>
            <person name="Blackburn K."/>
            <person name="Moyer M.B."/>
            <person name="Schlatzer D.M."/>
            <person name="Moseley A."/>
            <person name="Spremulli L.L."/>
        </authorList>
    </citation>
    <scope>IDENTIFICATION BY MASS SPECTROMETRY</scope>
    <scope>SUBCELLULAR LOCATION</scope>
</reference>
<reference key="4">
    <citation type="journal article" date="2006" name="J. Mol. Biol.">
        <title>A structural model for the large subunit of the mammalian mitochondrial ribosome.</title>
        <authorList>
            <person name="Mears J.A."/>
            <person name="Sharma M.R."/>
            <person name="Gutell R.R."/>
            <person name="McCook A.S."/>
            <person name="Richardson P.E."/>
            <person name="Caulfield T.R."/>
            <person name="Agrawal R.K."/>
            <person name="Harvey S.C."/>
        </authorList>
    </citation>
    <scope>STRUCTURE BY ELECTRON MICROSCOPY (12 ANGSTROMS)</scope>
    <scope>SUBCELLULAR LOCATION</scope>
</reference>
<comment type="subunit">
    <text evidence="2">Component of the mitochondrial ribosome large subunit (39S) which comprises a 16S rRNA and about 50 distinct proteins.</text>
</comment>
<comment type="subcellular location">
    <subcellularLocation>
        <location evidence="2 3 4">Mitochondrion</location>
    </subcellularLocation>
</comment>
<comment type="similarity">
    <text evidence="5">Belongs to the universal ribosomal protein uL22 family.</text>
</comment>